<feature type="chain" id="PRO_0000075279" description="Alanine--tRNA ligase">
    <location>
        <begin position="1"/>
        <end position="871"/>
    </location>
</feature>
<feature type="binding site" evidence="1">
    <location>
        <position position="590"/>
    </location>
    <ligand>
        <name>Zn(2+)</name>
        <dbReference type="ChEBI" id="CHEBI:29105"/>
    </ligand>
</feature>
<feature type="binding site" evidence="1">
    <location>
        <position position="594"/>
    </location>
    <ligand>
        <name>Zn(2+)</name>
        <dbReference type="ChEBI" id="CHEBI:29105"/>
    </ligand>
</feature>
<feature type="binding site" evidence="1">
    <location>
        <position position="694"/>
    </location>
    <ligand>
        <name>Zn(2+)</name>
        <dbReference type="ChEBI" id="CHEBI:29105"/>
    </ligand>
</feature>
<feature type="binding site" evidence="1">
    <location>
        <position position="698"/>
    </location>
    <ligand>
        <name>Zn(2+)</name>
        <dbReference type="ChEBI" id="CHEBI:29105"/>
    </ligand>
</feature>
<name>SYA_THEAC</name>
<sequence>MEKQTGELDLEFFLNSGFEKKQCIKCGSYFWTQDKERNTCGDTPCDEYTFIGNSPVPKSYSLSEMRDAFIKFFEKRGHKFLKPYPVVPRWREDVLLVNASIYDFQPHVTSGIVRPPGNPIVMSQPSIRMNDVDLVGITGRHLTSFEMLCHDSFNTKDKTVYWKEETVHYCYDFLTEGLGIDGKLISFKEKPWSGGGNAGNALEVFVRGLEVATLVFMDMKEDPNGPYEIDGIRYSKMDMRIVDTGYGLERLTWLSQGTPTVYQAIYPDIIQHVMKNSSVSDIDEEFLSEVVKASVMKEPYEESFVISQLEKRYPDARQRFEEIKKVRDVFLMIDHARSLMHMFAAYVIPSNVKVGYLARMLIRRAYRAISNTGYRGSLMDLIRMNHEDLKDIVPDFPEQFVSDVLSIEEEKYRDVERHGTQIIDKMISNKGKLSLDDLVLLYDSHGISPETVKAYLETKGMEIDVPDNFHAIVIKRHEKGETEKKKYSDYPEIETRTLYYDDPFMREFTGLVLFSKGNEIILDKTAFYPEGGGQPWDLGYFEYKGKRINVVAVRKYGKTIVHTLDGEIPQGVRVHGVIDWERRSRLMVHHTSTHLLLGVLREVLGEHVWQNGVQKDVEESRLDITHYRKIDEETIRKIEERVFDLIREGREVSVRNLDWYSAIDKYGFRLFEGGVPLTPKIRVVEIQGVDAEGCGGTHLKNISSIGVLKIRKVEAIQENIYRITFSAGVPALHLFQESYEASYGISTLLKKPIEEIAQSVSELSKGYADLRRSLAEARRRDIENRIANAKKIGTPGAEYPIIEADDADIGEISRIAHSRKVDLIVETRIAGKFKYTAISPSKKARDMIRKLFNADPEGNDSMASYINEYSE</sequence>
<accession>Q9HJW4</accession>
<proteinExistence type="inferred from homology"/>
<dbReference type="EC" id="6.1.1.7" evidence="1"/>
<dbReference type="EMBL" id="AL445065">
    <property type="protein sequence ID" value="CAC11978.1"/>
    <property type="molecule type" value="Genomic_DNA"/>
</dbReference>
<dbReference type="RefSeq" id="WP_010901260.1">
    <property type="nucleotide sequence ID" value="NC_002578.1"/>
</dbReference>
<dbReference type="SMR" id="Q9HJW4"/>
<dbReference type="FunCoup" id="Q9HJW4">
    <property type="interactions" value="161"/>
</dbReference>
<dbReference type="STRING" id="273075.gene:9572063"/>
<dbReference type="PaxDb" id="273075-Ta0849"/>
<dbReference type="EnsemblBacteria" id="CAC11978">
    <property type="protein sequence ID" value="CAC11978"/>
    <property type="gene ID" value="CAC11978"/>
</dbReference>
<dbReference type="KEGG" id="tac:Ta0849"/>
<dbReference type="eggNOG" id="arCOG01255">
    <property type="taxonomic scope" value="Archaea"/>
</dbReference>
<dbReference type="HOGENOM" id="CLU_004485_4_0_2"/>
<dbReference type="InParanoid" id="Q9HJW4"/>
<dbReference type="OrthoDB" id="7506at2157"/>
<dbReference type="Proteomes" id="UP000001024">
    <property type="component" value="Chromosome"/>
</dbReference>
<dbReference type="GO" id="GO:0005737">
    <property type="term" value="C:cytoplasm"/>
    <property type="evidence" value="ECO:0007669"/>
    <property type="project" value="UniProtKB-SubCell"/>
</dbReference>
<dbReference type="GO" id="GO:0004813">
    <property type="term" value="F:alanine-tRNA ligase activity"/>
    <property type="evidence" value="ECO:0007669"/>
    <property type="project" value="UniProtKB-UniRule"/>
</dbReference>
<dbReference type="GO" id="GO:0002161">
    <property type="term" value="F:aminoacyl-tRNA deacylase activity"/>
    <property type="evidence" value="ECO:0007669"/>
    <property type="project" value="UniProtKB-ARBA"/>
</dbReference>
<dbReference type="GO" id="GO:0005524">
    <property type="term" value="F:ATP binding"/>
    <property type="evidence" value="ECO:0007669"/>
    <property type="project" value="UniProtKB-UniRule"/>
</dbReference>
<dbReference type="GO" id="GO:0000049">
    <property type="term" value="F:tRNA binding"/>
    <property type="evidence" value="ECO:0007669"/>
    <property type="project" value="UniProtKB-KW"/>
</dbReference>
<dbReference type="GO" id="GO:0008270">
    <property type="term" value="F:zinc ion binding"/>
    <property type="evidence" value="ECO:0007669"/>
    <property type="project" value="UniProtKB-UniRule"/>
</dbReference>
<dbReference type="GO" id="GO:0006419">
    <property type="term" value="P:alanyl-tRNA aminoacylation"/>
    <property type="evidence" value="ECO:0007669"/>
    <property type="project" value="UniProtKB-UniRule"/>
</dbReference>
<dbReference type="CDD" id="cd00673">
    <property type="entry name" value="AlaRS_core"/>
    <property type="match status" value="1"/>
</dbReference>
<dbReference type="FunFam" id="3.30.930.10:FF:000056">
    <property type="entry name" value="Alanine--tRNA ligase"/>
    <property type="match status" value="1"/>
</dbReference>
<dbReference type="FunFam" id="3.30.980.10:FF:000004">
    <property type="entry name" value="Alanine--tRNA ligase, cytoplasmic"/>
    <property type="match status" value="1"/>
</dbReference>
<dbReference type="Gene3D" id="2.40.30.130">
    <property type="match status" value="1"/>
</dbReference>
<dbReference type="Gene3D" id="3.30.930.10">
    <property type="entry name" value="Bira Bifunctional Protein, Domain 2"/>
    <property type="match status" value="1"/>
</dbReference>
<dbReference type="Gene3D" id="3.30.980.10">
    <property type="entry name" value="Threonyl-trna Synthetase, Chain A, domain 2"/>
    <property type="match status" value="1"/>
</dbReference>
<dbReference type="HAMAP" id="MF_00036_A">
    <property type="entry name" value="Ala_tRNA_synth_A"/>
    <property type="match status" value="1"/>
</dbReference>
<dbReference type="InterPro" id="IPR045864">
    <property type="entry name" value="aa-tRNA-synth_II/BPL/LPL"/>
</dbReference>
<dbReference type="InterPro" id="IPR002318">
    <property type="entry name" value="Ala-tRNA-lgiase_IIc"/>
</dbReference>
<dbReference type="InterPro" id="IPR018162">
    <property type="entry name" value="Ala-tRNA-ligase_IIc_anticod-bd"/>
</dbReference>
<dbReference type="InterPro" id="IPR018165">
    <property type="entry name" value="Ala-tRNA-synth_IIc_core"/>
</dbReference>
<dbReference type="InterPro" id="IPR018164">
    <property type="entry name" value="Ala-tRNA-synth_IIc_N"/>
</dbReference>
<dbReference type="InterPro" id="IPR022429">
    <property type="entry name" value="Ala-tRNA_lgiase_arc"/>
</dbReference>
<dbReference type="InterPro" id="IPR050058">
    <property type="entry name" value="Ala-tRNA_ligase"/>
</dbReference>
<dbReference type="InterPro" id="IPR018163">
    <property type="entry name" value="Thr/Ala-tRNA-synth_IIc_edit"/>
</dbReference>
<dbReference type="InterPro" id="IPR009000">
    <property type="entry name" value="Transl_B-barrel_sf"/>
</dbReference>
<dbReference type="InterPro" id="IPR012947">
    <property type="entry name" value="tRNA_SAD"/>
</dbReference>
<dbReference type="NCBIfam" id="TIGR03683">
    <property type="entry name" value="A-tRNA_syn_arch"/>
    <property type="match status" value="1"/>
</dbReference>
<dbReference type="NCBIfam" id="TIGR00344">
    <property type="entry name" value="alaS"/>
    <property type="match status" value="1"/>
</dbReference>
<dbReference type="PANTHER" id="PTHR11777:SF9">
    <property type="entry name" value="ALANINE--TRNA LIGASE, CYTOPLASMIC"/>
    <property type="match status" value="1"/>
</dbReference>
<dbReference type="PANTHER" id="PTHR11777">
    <property type="entry name" value="ALANYL-TRNA SYNTHETASE"/>
    <property type="match status" value="1"/>
</dbReference>
<dbReference type="Pfam" id="PF01411">
    <property type="entry name" value="tRNA-synt_2c"/>
    <property type="match status" value="1"/>
</dbReference>
<dbReference type="Pfam" id="PF07973">
    <property type="entry name" value="tRNA_SAD"/>
    <property type="match status" value="1"/>
</dbReference>
<dbReference type="PRINTS" id="PR00980">
    <property type="entry name" value="TRNASYNTHALA"/>
</dbReference>
<dbReference type="SMART" id="SM00863">
    <property type="entry name" value="tRNA_SAD"/>
    <property type="match status" value="1"/>
</dbReference>
<dbReference type="SUPFAM" id="SSF55681">
    <property type="entry name" value="Class II aaRS and biotin synthetases"/>
    <property type="match status" value="1"/>
</dbReference>
<dbReference type="SUPFAM" id="SSF101353">
    <property type="entry name" value="Putative anticodon-binding domain of alanyl-tRNA synthetase (AlaRS)"/>
    <property type="match status" value="1"/>
</dbReference>
<dbReference type="SUPFAM" id="SSF55186">
    <property type="entry name" value="ThrRS/AlaRS common domain"/>
    <property type="match status" value="1"/>
</dbReference>
<dbReference type="SUPFAM" id="SSF50447">
    <property type="entry name" value="Translation proteins"/>
    <property type="match status" value="1"/>
</dbReference>
<dbReference type="PROSITE" id="PS50860">
    <property type="entry name" value="AA_TRNA_LIGASE_II_ALA"/>
    <property type="match status" value="1"/>
</dbReference>
<reference key="1">
    <citation type="journal article" date="2000" name="Nature">
        <title>The genome sequence of the thermoacidophilic scavenger Thermoplasma acidophilum.</title>
        <authorList>
            <person name="Ruepp A."/>
            <person name="Graml W."/>
            <person name="Santos-Martinez M.-L."/>
            <person name="Koretke K.K."/>
            <person name="Volker C."/>
            <person name="Mewes H.-W."/>
            <person name="Frishman D."/>
            <person name="Stocker S."/>
            <person name="Lupas A.N."/>
            <person name="Baumeister W."/>
        </authorList>
    </citation>
    <scope>NUCLEOTIDE SEQUENCE [LARGE SCALE GENOMIC DNA]</scope>
    <source>
        <strain>ATCC 25905 / DSM 1728 / JCM 9062 / NBRC 15155 / AMRC-C165</strain>
    </source>
</reference>
<keyword id="KW-0030">Aminoacyl-tRNA synthetase</keyword>
<keyword id="KW-0067">ATP-binding</keyword>
<keyword id="KW-0963">Cytoplasm</keyword>
<keyword id="KW-0436">Ligase</keyword>
<keyword id="KW-0479">Metal-binding</keyword>
<keyword id="KW-0547">Nucleotide-binding</keyword>
<keyword id="KW-0648">Protein biosynthesis</keyword>
<keyword id="KW-1185">Reference proteome</keyword>
<keyword id="KW-0694">RNA-binding</keyword>
<keyword id="KW-0820">tRNA-binding</keyword>
<keyword id="KW-0862">Zinc</keyword>
<protein>
    <recommendedName>
        <fullName evidence="1">Alanine--tRNA ligase</fullName>
        <ecNumber evidence="1">6.1.1.7</ecNumber>
    </recommendedName>
    <alternativeName>
        <fullName evidence="1">Alanyl-tRNA synthetase</fullName>
        <shortName evidence="1">AlaRS</shortName>
    </alternativeName>
</protein>
<organism>
    <name type="scientific">Thermoplasma acidophilum (strain ATCC 25905 / DSM 1728 / JCM 9062 / NBRC 15155 / AMRC-C165)</name>
    <dbReference type="NCBI Taxonomy" id="273075"/>
    <lineage>
        <taxon>Archaea</taxon>
        <taxon>Methanobacteriati</taxon>
        <taxon>Thermoplasmatota</taxon>
        <taxon>Thermoplasmata</taxon>
        <taxon>Thermoplasmatales</taxon>
        <taxon>Thermoplasmataceae</taxon>
        <taxon>Thermoplasma</taxon>
    </lineage>
</organism>
<gene>
    <name evidence="1" type="primary">alaS</name>
    <name type="ordered locus">Ta0849</name>
</gene>
<comment type="function">
    <text evidence="1">Catalyzes the attachment of alanine to tRNA(Ala) in a two-step reaction: alanine is first activated by ATP to form Ala-AMP and then transferred to the acceptor end of tRNA(Ala). Also edits incorrectly charged Ser-tRNA(Ala) and Gly-tRNA(Ala) via its editing domain.</text>
</comment>
<comment type="catalytic activity">
    <reaction evidence="1">
        <text>tRNA(Ala) + L-alanine + ATP = L-alanyl-tRNA(Ala) + AMP + diphosphate</text>
        <dbReference type="Rhea" id="RHEA:12540"/>
        <dbReference type="Rhea" id="RHEA-COMP:9657"/>
        <dbReference type="Rhea" id="RHEA-COMP:9923"/>
        <dbReference type="ChEBI" id="CHEBI:30616"/>
        <dbReference type="ChEBI" id="CHEBI:33019"/>
        <dbReference type="ChEBI" id="CHEBI:57972"/>
        <dbReference type="ChEBI" id="CHEBI:78442"/>
        <dbReference type="ChEBI" id="CHEBI:78497"/>
        <dbReference type="ChEBI" id="CHEBI:456215"/>
        <dbReference type="EC" id="6.1.1.7"/>
    </reaction>
</comment>
<comment type="cofactor">
    <cofactor evidence="1">
        <name>Zn(2+)</name>
        <dbReference type="ChEBI" id="CHEBI:29105"/>
    </cofactor>
    <text evidence="1">Binds 1 zinc ion per subunit.</text>
</comment>
<comment type="subcellular location">
    <subcellularLocation>
        <location evidence="1">Cytoplasm</location>
    </subcellularLocation>
</comment>
<comment type="domain">
    <text evidence="1">Consists of three domains; the N-terminal catalytic domain, the editing domain and the C-terminal C-Ala domain. The editing domain removes incorrectly charged amino acids, while the C-Ala domain, along with tRNA(Ala), serves as a bridge to cooperatively bring together the editing and aminoacylation centers thus stimulating deacylation of misacylated tRNAs.</text>
</comment>
<comment type="similarity">
    <text evidence="1">Belongs to the class-II aminoacyl-tRNA synthetase family.</text>
</comment>
<evidence type="ECO:0000255" key="1">
    <source>
        <dbReference type="HAMAP-Rule" id="MF_00036"/>
    </source>
</evidence>